<sequence length="229" mass="25679">MLKIQNLKKSYGKRTILNNVNMNIPKGKVYALIGPNGAGKSTIMKILTGLVSKTSGSIIFEGREWSRRDLRKIGSIIEEPPLYKNLSAYDNMKVVTTMLGVSESTILPLLNKVGLGNIDKRPVKQFSLGMKQRLGIAISLINSPKLLILDEPTNGLDPIGIQELREIIESFKSEGMTIMISSHILSEVEHLADFIGFIYEGKIILEKEYDGSENLEELFNNQILFEKRR</sequence>
<dbReference type="EMBL" id="AB030831">
    <property type="protein sequence ID" value="BAB08166.1"/>
    <property type="molecule type" value="Genomic_DNA"/>
</dbReference>
<dbReference type="RefSeq" id="WP_010922274.1">
    <property type="nucleotide sequence ID" value="NZ_WXZK01000013.1"/>
</dbReference>
<dbReference type="SMR" id="P0C0E2"/>
<dbReference type="STRING" id="1314.SD89_04060"/>
<dbReference type="eggNOG" id="COG1131">
    <property type="taxonomic scope" value="Bacteria"/>
</dbReference>
<dbReference type="OMA" id="ILSEGTM"/>
<dbReference type="GO" id="GO:0005524">
    <property type="term" value="F:ATP binding"/>
    <property type="evidence" value="ECO:0007669"/>
    <property type="project" value="UniProtKB-KW"/>
</dbReference>
<dbReference type="GO" id="GO:0016887">
    <property type="term" value="F:ATP hydrolysis activity"/>
    <property type="evidence" value="ECO:0007669"/>
    <property type="project" value="InterPro"/>
</dbReference>
<dbReference type="GO" id="GO:0043213">
    <property type="term" value="P:bacteriocin transport"/>
    <property type="evidence" value="ECO:0007669"/>
    <property type="project" value="UniProtKB-KW"/>
</dbReference>
<dbReference type="GO" id="GO:0015031">
    <property type="term" value="P:protein transport"/>
    <property type="evidence" value="ECO:0007669"/>
    <property type="project" value="UniProtKB-KW"/>
</dbReference>
<dbReference type="Gene3D" id="3.40.50.300">
    <property type="entry name" value="P-loop containing nucleotide triphosphate hydrolases"/>
    <property type="match status" value="1"/>
</dbReference>
<dbReference type="InterPro" id="IPR003593">
    <property type="entry name" value="AAA+_ATPase"/>
</dbReference>
<dbReference type="InterPro" id="IPR022501">
    <property type="entry name" value="ABC_Gallidermin_ATP-bd"/>
</dbReference>
<dbReference type="InterPro" id="IPR003439">
    <property type="entry name" value="ABC_transporter-like_ATP-bd"/>
</dbReference>
<dbReference type="InterPro" id="IPR017871">
    <property type="entry name" value="ABC_transporter-like_CS"/>
</dbReference>
<dbReference type="InterPro" id="IPR027417">
    <property type="entry name" value="P-loop_NTPase"/>
</dbReference>
<dbReference type="NCBIfam" id="TIGR03740">
    <property type="entry name" value="galliderm_ABC"/>
    <property type="match status" value="1"/>
</dbReference>
<dbReference type="PANTHER" id="PTHR43335">
    <property type="entry name" value="ABC TRANSPORTER, ATP-BINDING PROTEIN"/>
    <property type="match status" value="1"/>
</dbReference>
<dbReference type="PANTHER" id="PTHR43335:SF8">
    <property type="entry name" value="ABC TRANSPORTER, ATP-BINDING PROTEIN"/>
    <property type="match status" value="1"/>
</dbReference>
<dbReference type="Pfam" id="PF00005">
    <property type="entry name" value="ABC_tran"/>
    <property type="match status" value="1"/>
</dbReference>
<dbReference type="SMART" id="SM00382">
    <property type="entry name" value="AAA"/>
    <property type="match status" value="1"/>
</dbReference>
<dbReference type="SUPFAM" id="SSF52540">
    <property type="entry name" value="P-loop containing nucleoside triphosphate hydrolases"/>
    <property type="match status" value="1"/>
</dbReference>
<dbReference type="PROSITE" id="PS00211">
    <property type="entry name" value="ABC_TRANSPORTER_1"/>
    <property type="match status" value="1"/>
</dbReference>
<dbReference type="PROSITE" id="PS50893">
    <property type="entry name" value="ABC_TRANSPORTER_2"/>
    <property type="match status" value="1"/>
</dbReference>
<comment type="function">
    <text evidence="2">Implicated in the export process of the lantibiotic SrtA.</text>
</comment>
<comment type="similarity">
    <text evidence="2">Belongs to the ABC transporter superfamily.</text>
</comment>
<protein>
    <recommendedName>
        <fullName>Lantibiotic transport ATP-binding protein SrtF</fullName>
    </recommendedName>
</protein>
<keyword id="KW-0067">ATP-binding</keyword>
<keyword id="KW-0080">Bacteriocin transport</keyword>
<keyword id="KW-0547">Nucleotide-binding</keyword>
<keyword id="KW-0653">Protein transport</keyword>
<keyword id="KW-0813">Transport</keyword>
<feature type="chain" id="PRO_0000092978" description="Lantibiotic transport ATP-binding protein SrtF">
    <location>
        <begin position="1"/>
        <end position="229"/>
    </location>
</feature>
<feature type="domain" description="ABC transporter" evidence="1">
    <location>
        <begin position="2"/>
        <end position="225"/>
    </location>
</feature>
<feature type="binding site" evidence="1">
    <location>
        <begin position="34"/>
        <end position="41"/>
    </location>
    <ligand>
        <name>ATP</name>
        <dbReference type="ChEBI" id="CHEBI:30616"/>
    </ligand>
</feature>
<evidence type="ECO:0000255" key="1">
    <source>
        <dbReference type="PROSITE-ProRule" id="PRU00434"/>
    </source>
</evidence>
<evidence type="ECO:0000305" key="2"/>
<reference key="1">
    <citation type="journal article" date="2001" name="J. Biochem.">
        <title>New gene cluster for lantibiotic streptin possibly involved in streptolysin S formation.</title>
        <authorList>
            <person name="Karaya K."/>
            <person name="Shimizu T."/>
            <person name="Taketo A."/>
        </authorList>
    </citation>
    <scope>NUCLEOTIDE SEQUENCE [GENOMIC DNA]</scope>
    <source>
        <strain>BL-T</strain>
    </source>
</reference>
<name>SRTF_STRPY</name>
<gene>
    <name type="primary">srtF</name>
</gene>
<proteinExistence type="inferred from homology"/>
<accession>P0C0E2</accession>
<accession>Q9FDU7</accession>
<organism>
    <name type="scientific">Streptococcus pyogenes</name>
    <dbReference type="NCBI Taxonomy" id="1314"/>
    <lineage>
        <taxon>Bacteria</taxon>
        <taxon>Bacillati</taxon>
        <taxon>Bacillota</taxon>
        <taxon>Bacilli</taxon>
        <taxon>Lactobacillales</taxon>
        <taxon>Streptococcaceae</taxon>
        <taxon>Streptococcus</taxon>
    </lineage>
</organism>